<dbReference type="EMBL" id="CP001217">
    <property type="protein sequence ID" value="ACJ08265.1"/>
    <property type="molecule type" value="Genomic_DNA"/>
</dbReference>
<dbReference type="SMR" id="B6JMY7"/>
<dbReference type="KEGG" id="hpp:HPP12_1113"/>
<dbReference type="HOGENOM" id="CLU_103507_2_1_7"/>
<dbReference type="Proteomes" id="UP000008198">
    <property type="component" value="Chromosome"/>
</dbReference>
<dbReference type="GO" id="GO:0022625">
    <property type="term" value="C:cytosolic large ribosomal subunit"/>
    <property type="evidence" value="ECO:0007669"/>
    <property type="project" value="TreeGrafter"/>
</dbReference>
<dbReference type="GO" id="GO:0003735">
    <property type="term" value="F:structural constituent of ribosome"/>
    <property type="evidence" value="ECO:0007669"/>
    <property type="project" value="InterPro"/>
</dbReference>
<dbReference type="GO" id="GO:0006412">
    <property type="term" value="P:translation"/>
    <property type="evidence" value="ECO:0007669"/>
    <property type="project" value="UniProtKB-UniRule"/>
</dbReference>
<dbReference type="FunFam" id="2.30.30.790:FF:000001">
    <property type="entry name" value="50S ribosomal protein L19"/>
    <property type="match status" value="1"/>
</dbReference>
<dbReference type="Gene3D" id="2.30.30.790">
    <property type="match status" value="1"/>
</dbReference>
<dbReference type="HAMAP" id="MF_00402">
    <property type="entry name" value="Ribosomal_bL19"/>
    <property type="match status" value="1"/>
</dbReference>
<dbReference type="InterPro" id="IPR001857">
    <property type="entry name" value="Ribosomal_bL19"/>
</dbReference>
<dbReference type="InterPro" id="IPR018257">
    <property type="entry name" value="Ribosomal_bL19_CS"/>
</dbReference>
<dbReference type="InterPro" id="IPR038657">
    <property type="entry name" value="Ribosomal_bL19_sf"/>
</dbReference>
<dbReference type="InterPro" id="IPR008991">
    <property type="entry name" value="Translation_prot_SH3-like_sf"/>
</dbReference>
<dbReference type="NCBIfam" id="TIGR01024">
    <property type="entry name" value="rplS_bact"/>
    <property type="match status" value="1"/>
</dbReference>
<dbReference type="PANTHER" id="PTHR15680:SF9">
    <property type="entry name" value="LARGE RIBOSOMAL SUBUNIT PROTEIN BL19M"/>
    <property type="match status" value="1"/>
</dbReference>
<dbReference type="PANTHER" id="PTHR15680">
    <property type="entry name" value="RIBOSOMAL PROTEIN L19"/>
    <property type="match status" value="1"/>
</dbReference>
<dbReference type="Pfam" id="PF01245">
    <property type="entry name" value="Ribosomal_L19"/>
    <property type="match status" value="1"/>
</dbReference>
<dbReference type="PIRSF" id="PIRSF002191">
    <property type="entry name" value="Ribosomal_L19"/>
    <property type="match status" value="1"/>
</dbReference>
<dbReference type="PRINTS" id="PR00061">
    <property type="entry name" value="RIBOSOMALL19"/>
</dbReference>
<dbReference type="SUPFAM" id="SSF50104">
    <property type="entry name" value="Translation proteins SH3-like domain"/>
    <property type="match status" value="1"/>
</dbReference>
<dbReference type="PROSITE" id="PS01015">
    <property type="entry name" value="RIBOSOMAL_L19"/>
    <property type="match status" value="1"/>
</dbReference>
<feature type="chain" id="PRO_1000193848" description="Large ribosomal subunit protein bL19">
    <location>
        <begin position="1"/>
        <end position="118"/>
    </location>
</feature>
<accession>B6JMY7</accession>
<evidence type="ECO:0000255" key="1">
    <source>
        <dbReference type="HAMAP-Rule" id="MF_00402"/>
    </source>
</evidence>
<evidence type="ECO:0000305" key="2"/>
<sequence>MKNRYIQQFEDAQLKDKTMPIFKAGDTLKLGITIKEGEKTRTQYFEGVCIAIRGNGVDKTFCVRKIGANNIGVEKIFPFYSESLASVEVLRVGRVRRAKLYYLRDRRGKAARIKEVRH</sequence>
<proteinExistence type="inferred from homology"/>
<protein>
    <recommendedName>
        <fullName evidence="1">Large ribosomal subunit protein bL19</fullName>
    </recommendedName>
    <alternativeName>
        <fullName evidence="2">50S ribosomal protein L19</fullName>
    </alternativeName>
</protein>
<keyword id="KW-0687">Ribonucleoprotein</keyword>
<keyword id="KW-0689">Ribosomal protein</keyword>
<gene>
    <name evidence="1" type="primary">rplS</name>
    <name type="ordered locus">HPP12_1113</name>
</gene>
<comment type="function">
    <text evidence="1">This protein is located at the 30S-50S ribosomal subunit interface and may play a role in the structure and function of the aminoacyl-tRNA binding site.</text>
</comment>
<comment type="similarity">
    <text evidence="1">Belongs to the bacterial ribosomal protein bL19 family.</text>
</comment>
<organism>
    <name type="scientific">Helicobacter pylori (strain P12)</name>
    <dbReference type="NCBI Taxonomy" id="570508"/>
    <lineage>
        <taxon>Bacteria</taxon>
        <taxon>Pseudomonadati</taxon>
        <taxon>Campylobacterota</taxon>
        <taxon>Epsilonproteobacteria</taxon>
        <taxon>Campylobacterales</taxon>
        <taxon>Helicobacteraceae</taxon>
        <taxon>Helicobacter</taxon>
    </lineage>
</organism>
<name>RL19_HELP2</name>
<reference key="1">
    <citation type="submission" date="2008-10" db="EMBL/GenBank/DDBJ databases">
        <title>The complete genome sequence of Helicobacter pylori strain P12.</title>
        <authorList>
            <person name="Fischer W."/>
            <person name="Windhager L."/>
            <person name="Karnholz A."/>
            <person name="Zeiller M."/>
            <person name="Zimmer R."/>
            <person name="Haas R."/>
        </authorList>
    </citation>
    <scope>NUCLEOTIDE SEQUENCE [LARGE SCALE GENOMIC DNA]</scope>
    <source>
        <strain>P12</strain>
    </source>
</reference>